<gene>
    <name type="primary">rps4</name>
</gene>
<evidence type="ECO:0000250" key="1"/>
<evidence type="ECO:0000256" key="2">
    <source>
        <dbReference type="SAM" id="MobiDB-lite"/>
    </source>
</evidence>
<evidence type="ECO:0000305" key="3"/>
<accession>Q8S8X2</accession>
<geneLocation type="chloroplast"/>
<name>RR4_ATRBE</name>
<organism>
    <name type="scientific">Atropa belladonna</name>
    <name type="common">Belladonna</name>
    <name type="synonym">Deadly nightshade</name>
    <dbReference type="NCBI Taxonomy" id="33113"/>
    <lineage>
        <taxon>Eukaryota</taxon>
        <taxon>Viridiplantae</taxon>
        <taxon>Streptophyta</taxon>
        <taxon>Embryophyta</taxon>
        <taxon>Tracheophyta</taxon>
        <taxon>Spermatophyta</taxon>
        <taxon>Magnoliopsida</taxon>
        <taxon>eudicotyledons</taxon>
        <taxon>Gunneridae</taxon>
        <taxon>Pentapetalae</taxon>
        <taxon>asterids</taxon>
        <taxon>lamiids</taxon>
        <taxon>Solanales</taxon>
        <taxon>Solanaceae</taxon>
        <taxon>Solanoideae</taxon>
        <taxon>Hyoscyameae</taxon>
        <taxon>Atropa</taxon>
    </lineage>
</organism>
<proteinExistence type="inferred from homology"/>
<sequence>MSRYRGPRFKKIRRLGALPGLTNKKPRTGSDLRNQSRSGKKSQYRIRLEEKQKLRFHYGLTERQLLKYVRIARKAKGSTGQVLLQLLEMRLDNILFRLGMASTIPAARQLVNHRHILVNGRIVDIPSYRCKPRDIITAKDEQKSRALIQISLDSSPHEELPNHLTLHPFQYKGLVNQIIDSKWVGLKINELLVVEYYSRQT</sequence>
<feature type="chain" id="PRO_0000132541" description="Small ribosomal subunit protein uS4c">
    <location>
        <begin position="1"/>
        <end position="201"/>
    </location>
</feature>
<feature type="domain" description="S4 RNA-binding">
    <location>
        <begin position="89"/>
        <end position="149"/>
    </location>
</feature>
<feature type="region of interest" description="Disordered" evidence="2">
    <location>
        <begin position="17"/>
        <end position="44"/>
    </location>
</feature>
<protein>
    <recommendedName>
        <fullName evidence="3">Small ribosomal subunit protein uS4c</fullName>
    </recommendedName>
    <alternativeName>
        <fullName>30S ribosomal protein S4, chloroplastic</fullName>
    </alternativeName>
</protein>
<reference key="1">
    <citation type="journal article" date="2002" name="Mol. Biol. Evol.">
        <title>The plastid chromosome of Atropa belladonna and its comparison with that of Nicotiana tabacum: the role of RNA editing in generating divergence in the process of plant speciation.</title>
        <authorList>
            <person name="Schmitz-Linneweber C."/>
            <person name="Regel R."/>
            <person name="Du T.G."/>
            <person name="Hupfer H."/>
            <person name="Herrmann R.G."/>
            <person name="Maier R.M."/>
        </authorList>
    </citation>
    <scope>NUCLEOTIDE SEQUENCE [LARGE SCALE GENOMIC DNA]</scope>
    <source>
        <strain>cv. Ab5p(kan)</strain>
    </source>
</reference>
<comment type="function">
    <text evidence="1">One of the primary rRNA binding proteins, it binds directly to 16S rRNA where it nucleates assembly of the body of the 30S subunit.</text>
</comment>
<comment type="function">
    <text evidence="1">With S5 and S12 plays an important role in translational accuracy.</text>
</comment>
<comment type="subunit">
    <text evidence="1">Part of the 30S ribosomal subunit. Contacts protein S5. The interaction surface between S4 and S5 is involved in control of translational fidelity (By similarity).</text>
</comment>
<comment type="subcellular location">
    <subcellularLocation>
        <location>Plastid</location>
        <location>Chloroplast</location>
    </subcellularLocation>
</comment>
<comment type="similarity">
    <text evidence="3">Belongs to the universal ribosomal protein uS4 family.</text>
</comment>
<dbReference type="EMBL" id="AJ316582">
    <property type="protein sequence ID" value="CAC88046.1"/>
    <property type="molecule type" value="Genomic_DNA"/>
</dbReference>
<dbReference type="RefSeq" id="NP_783234.1">
    <property type="nucleotide sequence ID" value="NC_004561.1"/>
</dbReference>
<dbReference type="SMR" id="Q8S8X2"/>
<dbReference type="GeneID" id="806499"/>
<dbReference type="GO" id="GO:0009507">
    <property type="term" value="C:chloroplast"/>
    <property type="evidence" value="ECO:0007669"/>
    <property type="project" value="UniProtKB-SubCell"/>
</dbReference>
<dbReference type="GO" id="GO:0015935">
    <property type="term" value="C:small ribosomal subunit"/>
    <property type="evidence" value="ECO:0007669"/>
    <property type="project" value="InterPro"/>
</dbReference>
<dbReference type="GO" id="GO:0019843">
    <property type="term" value="F:rRNA binding"/>
    <property type="evidence" value="ECO:0007669"/>
    <property type="project" value="UniProtKB-UniRule"/>
</dbReference>
<dbReference type="GO" id="GO:0003735">
    <property type="term" value="F:structural constituent of ribosome"/>
    <property type="evidence" value="ECO:0007669"/>
    <property type="project" value="InterPro"/>
</dbReference>
<dbReference type="GO" id="GO:0042274">
    <property type="term" value="P:ribosomal small subunit biogenesis"/>
    <property type="evidence" value="ECO:0007669"/>
    <property type="project" value="TreeGrafter"/>
</dbReference>
<dbReference type="GO" id="GO:0006412">
    <property type="term" value="P:translation"/>
    <property type="evidence" value="ECO:0007669"/>
    <property type="project" value="UniProtKB-UniRule"/>
</dbReference>
<dbReference type="CDD" id="cd00165">
    <property type="entry name" value="S4"/>
    <property type="match status" value="1"/>
</dbReference>
<dbReference type="FunFam" id="1.10.1050.10:FF:000002">
    <property type="entry name" value="30S ribosomal protein S4, chloroplastic"/>
    <property type="match status" value="1"/>
</dbReference>
<dbReference type="FunFam" id="3.10.290.10:FF:000081">
    <property type="entry name" value="30S ribosomal protein S4, chloroplastic"/>
    <property type="match status" value="1"/>
</dbReference>
<dbReference type="Gene3D" id="1.10.1050.10">
    <property type="entry name" value="Ribosomal Protein S4 Delta 41, Chain A, domain 1"/>
    <property type="match status" value="1"/>
</dbReference>
<dbReference type="Gene3D" id="3.10.290.10">
    <property type="entry name" value="RNA-binding S4 domain"/>
    <property type="match status" value="1"/>
</dbReference>
<dbReference type="HAMAP" id="MF_01306_B">
    <property type="entry name" value="Ribosomal_uS4_B"/>
    <property type="match status" value="1"/>
</dbReference>
<dbReference type="InterPro" id="IPR022801">
    <property type="entry name" value="Ribosomal_uS4"/>
</dbReference>
<dbReference type="InterPro" id="IPR005709">
    <property type="entry name" value="Ribosomal_uS4_bac-type"/>
</dbReference>
<dbReference type="InterPro" id="IPR018079">
    <property type="entry name" value="Ribosomal_uS4_CS"/>
</dbReference>
<dbReference type="InterPro" id="IPR001912">
    <property type="entry name" value="Ribosomal_uS4_N"/>
</dbReference>
<dbReference type="InterPro" id="IPR002942">
    <property type="entry name" value="S4_RNA-bd"/>
</dbReference>
<dbReference type="InterPro" id="IPR036986">
    <property type="entry name" value="S4_RNA-bd_sf"/>
</dbReference>
<dbReference type="NCBIfam" id="NF003717">
    <property type="entry name" value="PRK05327.1"/>
    <property type="match status" value="1"/>
</dbReference>
<dbReference type="NCBIfam" id="TIGR01017">
    <property type="entry name" value="rpsD_bact"/>
    <property type="match status" value="1"/>
</dbReference>
<dbReference type="PANTHER" id="PTHR11831">
    <property type="entry name" value="30S 40S RIBOSOMAL PROTEIN"/>
    <property type="match status" value="1"/>
</dbReference>
<dbReference type="PANTHER" id="PTHR11831:SF4">
    <property type="entry name" value="SMALL RIBOSOMAL SUBUNIT PROTEIN US4M"/>
    <property type="match status" value="1"/>
</dbReference>
<dbReference type="Pfam" id="PF00163">
    <property type="entry name" value="Ribosomal_S4"/>
    <property type="match status" value="1"/>
</dbReference>
<dbReference type="Pfam" id="PF01479">
    <property type="entry name" value="S4"/>
    <property type="match status" value="1"/>
</dbReference>
<dbReference type="SMART" id="SM01390">
    <property type="entry name" value="Ribosomal_S4"/>
    <property type="match status" value="1"/>
</dbReference>
<dbReference type="SMART" id="SM00363">
    <property type="entry name" value="S4"/>
    <property type="match status" value="1"/>
</dbReference>
<dbReference type="SUPFAM" id="SSF55174">
    <property type="entry name" value="Alpha-L RNA-binding motif"/>
    <property type="match status" value="1"/>
</dbReference>
<dbReference type="PROSITE" id="PS00632">
    <property type="entry name" value="RIBOSOMAL_S4"/>
    <property type="match status" value="1"/>
</dbReference>
<dbReference type="PROSITE" id="PS50889">
    <property type="entry name" value="S4"/>
    <property type="match status" value="1"/>
</dbReference>
<keyword id="KW-0150">Chloroplast</keyword>
<keyword id="KW-0934">Plastid</keyword>
<keyword id="KW-0687">Ribonucleoprotein</keyword>
<keyword id="KW-0689">Ribosomal protein</keyword>
<keyword id="KW-0694">RNA-binding</keyword>
<keyword id="KW-0699">rRNA-binding</keyword>